<dbReference type="EC" id="2.3.2.27" evidence="1"/>
<dbReference type="EMBL" id="FO081667">
    <property type="protein sequence ID" value="CCD73190.1"/>
    <property type="molecule type" value="Genomic_DNA"/>
</dbReference>
<dbReference type="EMBL" id="FO081667">
    <property type="protein sequence ID" value="CCD73191.1"/>
    <property type="molecule type" value="Genomic_DNA"/>
</dbReference>
<dbReference type="PIR" id="S44866">
    <property type="entry name" value="S44866"/>
</dbReference>
<dbReference type="RefSeq" id="NP_001022699.1">
    <molecule id="P34537-2"/>
    <property type="nucleotide sequence ID" value="NM_001027528.6"/>
</dbReference>
<dbReference type="RefSeq" id="NP_001022700.1">
    <molecule id="P34537-1"/>
    <property type="nucleotide sequence ID" value="NM_001027529.6"/>
</dbReference>
<dbReference type="SMR" id="P34537"/>
<dbReference type="BioGRID" id="41384">
    <property type="interactions" value="15"/>
</dbReference>
<dbReference type="DIP" id="DIP-24823N"/>
<dbReference type="FunCoup" id="P34537">
    <property type="interactions" value="3326"/>
</dbReference>
<dbReference type="IntAct" id="P34537">
    <property type="interactions" value="3"/>
</dbReference>
<dbReference type="MINT" id="P34537"/>
<dbReference type="STRING" id="6239.R05D3.4b.1"/>
<dbReference type="iPTMnet" id="P34537"/>
<dbReference type="PaxDb" id="6239-R05D3.4b"/>
<dbReference type="PeptideAtlas" id="P34537"/>
<dbReference type="EnsemblMetazoa" id="R05D3.4a.1">
    <molecule id="P34537-2"/>
    <property type="protein sequence ID" value="R05D3.4a.1"/>
    <property type="gene ID" value="WBGene00007008"/>
</dbReference>
<dbReference type="EnsemblMetazoa" id="R05D3.4b.1">
    <molecule id="P34537-1"/>
    <property type="protein sequence ID" value="R05D3.4b.1"/>
    <property type="gene ID" value="WBGene00007008"/>
</dbReference>
<dbReference type="GeneID" id="176180"/>
<dbReference type="KEGG" id="cel:CELE_R05D3.4"/>
<dbReference type="UCSC" id="R05D3.4b">
    <molecule id="P34537-1"/>
    <property type="organism name" value="c. elegans"/>
</dbReference>
<dbReference type="AGR" id="WB:WBGene00007008"/>
<dbReference type="CTD" id="176180"/>
<dbReference type="WormBase" id="R05D3.4a">
    <molecule id="P34537-2"/>
    <property type="protein sequence ID" value="CE00283"/>
    <property type="gene ID" value="WBGene00007008"/>
    <property type="gene designation" value="rfp-1"/>
</dbReference>
<dbReference type="WormBase" id="R05D3.4b">
    <molecule id="P34537-1"/>
    <property type="protein sequence ID" value="CE37396"/>
    <property type="gene ID" value="WBGene00007008"/>
    <property type="gene designation" value="rfp-1"/>
</dbReference>
<dbReference type="eggNOG" id="KOG0978">
    <property type="taxonomic scope" value="Eukaryota"/>
</dbReference>
<dbReference type="GeneTree" id="ENSGT00390000002866"/>
<dbReference type="HOGENOM" id="CLU_387448_0_0_1"/>
<dbReference type="InParanoid" id="P34537"/>
<dbReference type="OMA" id="YRQMQEY"/>
<dbReference type="OrthoDB" id="10266039at2759"/>
<dbReference type="PhylomeDB" id="P34537"/>
<dbReference type="UniPathway" id="UPA00143"/>
<dbReference type="PRO" id="PR:P34537"/>
<dbReference type="Proteomes" id="UP000001940">
    <property type="component" value="Chromosome III"/>
</dbReference>
<dbReference type="Bgee" id="WBGene00007008">
    <property type="expression patterns" value="Expressed in embryo and 4 other cell types or tissues"/>
</dbReference>
<dbReference type="GO" id="GO:0033503">
    <property type="term" value="C:HULC complex"/>
    <property type="evidence" value="ECO:0000318"/>
    <property type="project" value="GO_Central"/>
</dbReference>
<dbReference type="GO" id="GO:0016020">
    <property type="term" value="C:membrane"/>
    <property type="evidence" value="ECO:0007669"/>
    <property type="project" value="GOC"/>
</dbReference>
<dbReference type="GO" id="GO:0005634">
    <property type="term" value="C:nucleus"/>
    <property type="evidence" value="ECO:0000314"/>
    <property type="project" value="UniProtKB"/>
</dbReference>
<dbReference type="GO" id="GO:0031624">
    <property type="term" value="F:ubiquitin conjugating enzyme binding"/>
    <property type="evidence" value="ECO:0000353"/>
    <property type="project" value="WormBase"/>
</dbReference>
<dbReference type="GO" id="GO:0061630">
    <property type="term" value="F:ubiquitin protein ligase activity"/>
    <property type="evidence" value="ECO:0000318"/>
    <property type="project" value="GO_Central"/>
</dbReference>
<dbReference type="GO" id="GO:0008270">
    <property type="term" value="F:zinc ion binding"/>
    <property type="evidence" value="ECO:0007669"/>
    <property type="project" value="UniProtKB-KW"/>
</dbReference>
<dbReference type="GO" id="GO:0006325">
    <property type="term" value="P:chromatin organization"/>
    <property type="evidence" value="ECO:0007669"/>
    <property type="project" value="UniProtKB-KW"/>
</dbReference>
<dbReference type="GO" id="GO:0006664">
    <property type="term" value="P:glycolipid metabolic process"/>
    <property type="evidence" value="ECO:0000315"/>
    <property type="project" value="UniProtKB"/>
</dbReference>
<dbReference type="GO" id="GO:0016567">
    <property type="term" value="P:protein ubiquitination"/>
    <property type="evidence" value="ECO:0007669"/>
    <property type="project" value="UniProtKB-UniPathway"/>
</dbReference>
<dbReference type="Gene3D" id="3.30.40.10">
    <property type="entry name" value="Zinc/RING finger domain, C3HC4 (zinc finger)"/>
    <property type="match status" value="1"/>
</dbReference>
<dbReference type="InterPro" id="IPR013956">
    <property type="entry name" value="E3_ubiquit_lig_Bre1"/>
</dbReference>
<dbReference type="InterPro" id="IPR018957">
    <property type="entry name" value="Znf_C3HC4_RING-type"/>
</dbReference>
<dbReference type="InterPro" id="IPR001841">
    <property type="entry name" value="Znf_RING"/>
</dbReference>
<dbReference type="InterPro" id="IPR013083">
    <property type="entry name" value="Znf_RING/FYVE/PHD"/>
</dbReference>
<dbReference type="InterPro" id="IPR017907">
    <property type="entry name" value="Znf_RING_CS"/>
</dbReference>
<dbReference type="PANTHER" id="PTHR23163:SF0">
    <property type="entry name" value="E3 UBIQUITIN-PROTEIN LIGASE BRE1"/>
    <property type="match status" value="1"/>
</dbReference>
<dbReference type="PANTHER" id="PTHR23163">
    <property type="entry name" value="RING FINGER PROTEIN-RELATED"/>
    <property type="match status" value="1"/>
</dbReference>
<dbReference type="Pfam" id="PF00097">
    <property type="entry name" value="zf-C3HC4"/>
    <property type="match status" value="1"/>
</dbReference>
<dbReference type="SMART" id="SM00184">
    <property type="entry name" value="RING"/>
    <property type="match status" value="1"/>
</dbReference>
<dbReference type="SUPFAM" id="SSF57850">
    <property type="entry name" value="RING/U-box"/>
    <property type="match status" value="1"/>
</dbReference>
<dbReference type="PROSITE" id="PS00518">
    <property type="entry name" value="ZF_RING_1"/>
    <property type="match status" value="1"/>
</dbReference>
<dbReference type="PROSITE" id="PS50089">
    <property type="entry name" value="ZF_RING_2"/>
    <property type="match status" value="1"/>
</dbReference>
<reference key="1">
    <citation type="journal article" date="2004" name="Dev. Biol.">
        <title>Characterization of C. elegans RING finger protein 1, a binding partner of ubiquitin-conjugating enzyme 1.</title>
        <authorList>
            <person name="Crowe E."/>
            <person name="Candido E.P.M."/>
        </authorList>
    </citation>
    <scope>NUCLEOTIDE SEQUENCE [MRNA] (ISOFORM A)</scope>
    <scope>INTERACTION WITH UBC-1</scope>
    <scope>DEVELOPMENTAL STAGE</scope>
    <scope>SUBCELLULAR LOCATION</scope>
    <scope>TISSUE SPECIFICITY</scope>
    <scope>DISRUPTION PHENOTYPE</scope>
</reference>
<reference key="2">
    <citation type="journal article" date="1994" name="Nature">
        <title>2.2 Mb of contiguous nucleotide sequence from chromosome III of C. elegans.</title>
        <authorList>
            <person name="Wilson R."/>
            <person name="Ainscough R."/>
            <person name="Anderson K."/>
            <person name="Baynes C."/>
            <person name="Berks M."/>
            <person name="Bonfield J."/>
            <person name="Burton J."/>
            <person name="Connell M."/>
            <person name="Copsey T."/>
            <person name="Cooper J."/>
            <person name="Coulson A."/>
            <person name="Craxton M."/>
            <person name="Dear S."/>
            <person name="Du Z."/>
            <person name="Durbin R."/>
            <person name="Favello A."/>
            <person name="Fraser A."/>
            <person name="Fulton L."/>
            <person name="Gardner A."/>
            <person name="Green P."/>
            <person name="Hawkins T."/>
            <person name="Hillier L."/>
            <person name="Jier M."/>
            <person name="Johnston L."/>
            <person name="Jones M."/>
            <person name="Kershaw J."/>
            <person name="Kirsten J."/>
            <person name="Laisster N."/>
            <person name="Latreille P."/>
            <person name="Lightning J."/>
            <person name="Lloyd C."/>
            <person name="Mortimore B."/>
            <person name="O'Callaghan M."/>
            <person name="Parsons J."/>
            <person name="Percy C."/>
            <person name="Rifken L."/>
            <person name="Roopra A."/>
            <person name="Saunders D."/>
            <person name="Shownkeen R."/>
            <person name="Sims M."/>
            <person name="Smaldon N."/>
            <person name="Smith A."/>
            <person name="Smith M."/>
            <person name="Sonnhammer E."/>
            <person name="Staden R."/>
            <person name="Sulston J."/>
            <person name="Thierry-Mieg J."/>
            <person name="Thomas K."/>
            <person name="Vaudin M."/>
            <person name="Vaughan K."/>
            <person name="Waterston R."/>
            <person name="Watson A."/>
            <person name="Weinstock L."/>
            <person name="Wilkinson-Sproat J."/>
            <person name="Wohldman P."/>
        </authorList>
    </citation>
    <scope>NUCLEOTIDE SEQUENCE [LARGE SCALE GENOMIC DNA]</scope>
    <source>
        <strain>Bristol N2</strain>
    </source>
</reference>
<reference key="3">
    <citation type="journal article" date="1998" name="Science">
        <title>Genome sequence of the nematode C. elegans: a platform for investigating biology.</title>
        <authorList>
            <consortium name="The C. elegans sequencing consortium"/>
        </authorList>
    </citation>
    <scope>NUCLEOTIDE SEQUENCE [LARGE SCALE GENOMIC DNA]</scope>
    <scope>ALTERNATIVE SPLICING</scope>
    <source>
        <strain>Bristol N2</strain>
    </source>
</reference>
<reference evidence="8" key="4">
    <citation type="journal article" date="2015" name="Development">
        <title>Proteasome regulation of the chromodomain protein MRG-1 controls the balance between proliferative fate and differentiation in the C. elegans germ line.</title>
        <authorList>
            <person name="Gupta P."/>
            <person name="Leahul L."/>
            <person name="Wang X."/>
            <person name="Wang C."/>
            <person name="Bakos B."/>
            <person name="Jasper K."/>
            <person name="Hansen D."/>
        </authorList>
    </citation>
    <scope>FUNCTION</scope>
    <scope>INTERACTION WITH MRG-1</scope>
    <scope>DISRUPTION PHENOTYPE</scope>
</reference>
<accession>P34537</accession>
<accession>Q65ZS6</accession>
<proteinExistence type="evidence at protein level"/>
<protein>
    <recommendedName>
        <fullName>E3 ubiquitin-protein ligase bre-1</fullName>
        <ecNumber evidence="1">2.3.2.27</ecNumber>
    </recommendedName>
    <alternativeName>
        <fullName>RING finger protein rfp-1</fullName>
    </alternativeName>
    <alternativeName>
        <fullName evidence="8">RING-type E3 ubiquitin transferase bre-1</fullName>
    </alternativeName>
</protein>
<sequence>MMKRSNEGIGGENYASSPSDDGQQKRRKIQFEPVRMPAVSNVNDIRARAVVYQTSKLKQQLLYKNKRIAELEKENERSKRRQQTDESNFLKVYNMFSDIEKYICTQTKNEFGEYIGGDTAPTGIDVLGMTNETYNKFFDQAKQNLRNAFVSYAKARHDRAHESTIFIDKLKTLIDSPTFNPNGVHKELTAKAASLAIQNEKLQSEVTKVQSDCYNLERKKRILTDKLSVQENRVQELEHQLEDARFETDKHMRLANKFEYKLATLVSEGQSGGNGGATPSSSGTTNATEKKISAPDIPPSETAAKEIENLRLERDEQESIASRRLQDLEEMNKKVQTLTQENSKLRLETQTFFSVDSIVNSEEYKNLKKYYSLAIKEYERVSKDLEDITTERDAFRSAKEARAMLMSEEHQKTLKEIQCQSDIHNSFYKVSHDSEVLRCEFETVKEEYNKTVKQSEWDEMKATLNTLRSMNRSLKSEKIRLREKDKQSQKDINTLKSELTSLKEAQDKCLLVPLEDVSNAPPEDVNKIRQEYESLCKEVKRLGAMEKQEKQKQVENLQKEVNRQIADKLSELETLRKTNEMLTNDEECISDELEAIGTAVEEEQERNAQLYIEKREQEDRNLKMMNDRMIQNQTFNRLREKLSCLESKAQTDAQIAKMHEFEKKANEELVTKLSESVQFKSAELTRLTNLMEQHRKNIQEVGMSRDENQIKADRCEGQMKQIQELYAAKAREIEDFKFKRQRAEEELETLRIKYERVKRNESVPAQSGDQVLEEANRQMKETLTCPSCKTRPKDCIMLKCYHLFCETCIKTMYDTRQRKCPKCNSNFGANDFHRIFI</sequence>
<organism>
    <name type="scientific">Caenorhabditis elegans</name>
    <dbReference type="NCBI Taxonomy" id="6239"/>
    <lineage>
        <taxon>Eukaryota</taxon>
        <taxon>Metazoa</taxon>
        <taxon>Ecdysozoa</taxon>
        <taxon>Nematoda</taxon>
        <taxon>Chromadorea</taxon>
        <taxon>Rhabditida</taxon>
        <taxon>Rhabditina</taxon>
        <taxon>Rhabditomorpha</taxon>
        <taxon>Rhabditoidea</taxon>
        <taxon>Rhabditidae</taxon>
        <taxon>Peloderinae</taxon>
        <taxon>Caenorhabditis</taxon>
    </lineage>
</organism>
<gene>
    <name type="primary">rfp-1</name>
    <name type="synonym">bre-1</name>
    <name type="ORF">R05D3.4</name>
</gene>
<evidence type="ECO:0000250" key="1">
    <source>
        <dbReference type="UniProtKB" id="O75150"/>
    </source>
</evidence>
<evidence type="ECO:0000255" key="2"/>
<evidence type="ECO:0000255" key="3">
    <source>
        <dbReference type="PROSITE-ProRule" id="PRU00175"/>
    </source>
</evidence>
<evidence type="ECO:0000256" key="4">
    <source>
        <dbReference type="SAM" id="MobiDB-lite"/>
    </source>
</evidence>
<evidence type="ECO:0000269" key="5">
    <source>
    </source>
</evidence>
<evidence type="ECO:0000269" key="6">
    <source>
    </source>
</evidence>
<evidence type="ECO:0000303" key="7">
    <source>
    </source>
</evidence>
<evidence type="ECO:0000305" key="8"/>
<feature type="chain" id="PRO_0000055845" description="E3 ubiquitin-protein ligase bre-1">
    <location>
        <begin position="1"/>
        <end position="837"/>
    </location>
</feature>
<feature type="zinc finger region" description="RING-type" evidence="3">
    <location>
        <begin position="785"/>
        <end position="824"/>
    </location>
</feature>
<feature type="region of interest" description="Interaction with ubc-1">
    <location>
        <begin position="1"/>
        <end position="313"/>
    </location>
</feature>
<feature type="region of interest" description="Disordered" evidence="4">
    <location>
        <begin position="1"/>
        <end position="33"/>
    </location>
</feature>
<feature type="region of interest" description="Disordered" evidence="4">
    <location>
        <begin position="269"/>
        <end position="302"/>
    </location>
</feature>
<feature type="coiled-coil region" evidence="2">
    <location>
        <begin position="54"/>
        <end position="89"/>
    </location>
</feature>
<feature type="coiled-coil region" evidence="2">
    <location>
        <begin position="185"/>
        <end position="253"/>
    </location>
</feature>
<feature type="coiled-coil region" evidence="2">
    <location>
        <begin position="300"/>
        <end position="397"/>
    </location>
</feature>
<feature type="coiled-coil region" evidence="2">
    <location>
        <begin position="458"/>
        <end position="651"/>
    </location>
</feature>
<feature type="coiled-coil region" evidence="2">
    <location>
        <begin position="677"/>
        <end position="763"/>
    </location>
</feature>
<feature type="compositionally biased region" description="Polar residues" evidence="4">
    <location>
        <begin position="277"/>
        <end position="287"/>
    </location>
</feature>
<feature type="splice variant" id="VSP_016614" description="In isoform a." evidence="7">
    <location>
        <begin position="556"/>
        <end position="558"/>
    </location>
</feature>
<keyword id="KW-0025">Alternative splicing</keyword>
<keyword id="KW-0156">Chromatin regulator</keyword>
<keyword id="KW-0175">Coiled coil</keyword>
<keyword id="KW-0479">Metal-binding</keyword>
<keyword id="KW-0539">Nucleus</keyword>
<keyword id="KW-1185">Reference proteome</keyword>
<keyword id="KW-0808">Transferase</keyword>
<keyword id="KW-0833">Ubl conjugation pathway</keyword>
<keyword id="KW-0862">Zinc</keyword>
<keyword id="KW-0863">Zinc-finger</keyword>
<name>BRE1_CAEEL</name>
<comment type="function">
    <text evidence="1 6">E3 ubiquitin-protein ligase that mediates monoubiquitination of 'Lys-117' of histone H2B (By similarity). H2B 'Lys-117' ubiquitination gives a specific tag for epigenetic transcriptional activation and is also prerequisite for histone H3 'Lys-4' and 'Lys-79' methylation (By similarity). Involved in regulating stem cell proliferative fate (PubMed:25564623).</text>
</comment>
<comment type="catalytic activity">
    <reaction evidence="1">
        <text>S-ubiquitinyl-[E2 ubiquitin-conjugating enzyme]-L-cysteine + [acceptor protein]-L-lysine = [E2 ubiquitin-conjugating enzyme]-L-cysteine + N(6)-ubiquitinyl-[acceptor protein]-L-lysine.</text>
        <dbReference type="EC" id="2.3.2.27"/>
    </reaction>
</comment>
<comment type="pathway">
    <text>Protein modification; protein ubiquitination.</text>
</comment>
<comment type="subunit">
    <text evidence="5 6">Interacts with ubc-1 (PubMed:14732404). Interacts with mrg-1 (PubMed:25564623).</text>
</comment>
<comment type="interaction">
    <interactant intactId="EBI-316712">
        <id>P34537</id>
    </interactant>
    <interactant intactId="EBI-316677">
        <id>P52478</id>
        <label>ubc-1</label>
    </interactant>
    <organismsDiffer>false</organismsDiffer>
    <experiments>7</experiments>
</comment>
<comment type="subcellular location">
    <subcellularLocation>
        <location evidence="5">Nucleus</location>
    </subcellularLocation>
</comment>
<comment type="alternative products">
    <event type="alternative splicing"/>
    <isoform>
        <id>P34537-1</id>
        <name>b</name>
        <sequence type="displayed"/>
    </isoform>
    <isoform>
        <id>P34537-2</id>
        <name>a</name>
        <sequence type="described" ref="VSP_016614"/>
    </isoform>
</comment>
<comment type="tissue specificity">
    <text evidence="5">In adult animals, expressed in oocytes, germ cells, pharyngeal and intestinal cells.</text>
</comment>
<comment type="developmental stage">
    <text evidence="5">Expressed at all life stages.</text>
</comment>
<comment type="disruption phenotype">
    <text evidence="5 6">Worms arrest their development at L1 stage, and show tail abnormalities (PubMed:14732404). RNAi-mediated knockdown on a glp-1 mutant background causes significant overproliferation of germline cells (PubMed:25564623).</text>
</comment>
<comment type="similarity">
    <text evidence="8">Belongs to the BRE1 family.</text>
</comment>